<accession>C0R090</accession>
<reference key="1">
    <citation type="journal article" date="2009" name="PLoS ONE">
        <title>Genome sequence of the pathogenic intestinal spirochete Brachyspira hyodysenteriae reveals adaptations to its lifestyle in the porcine large intestine.</title>
        <authorList>
            <person name="Bellgard M.I."/>
            <person name="Wanchanthuek P."/>
            <person name="La T."/>
            <person name="Ryan K."/>
            <person name="Moolhuijzen P."/>
            <person name="Albertyn Z."/>
            <person name="Shaban B."/>
            <person name="Motro Y."/>
            <person name="Dunn D.S."/>
            <person name="Schibeci D."/>
            <person name="Hunter A."/>
            <person name="Barrero R."/>
            <person name="Phillips N.D."/>
            <person name="Hampson D.J."/>
        </authorList>
    </citation>
    <scope>NUCLEOTIDE SEQUENCE [LARGE SCALE GENOMIC DNA]</scope>
    <source>
        <strain>ATCC 49526 / WA1</strain>
    </source>
</reference>
<dbReference type="EC" id="1.1.1.86" evidence="1"/>
<dbReference type="EMBL" id="CP001357">
    <property type="protein sequence ID" value="ACN83528.1"/>
    <property type="molecule type" value="Genomic_DNA"/>
</dbReference>
<dbReference type="RefSeq" id="WP_012670577.1">
    <property type="nucleotide sequence ID" value="NC_012225.1"/>
</dbReference>
<dbReference type="SMR" id="C0R090"/>
<dbReference type="STRING" id="565034.BHWA1_01045"/>
<dbReference type="GeneID" id="63962153"/>
<dbReference type="KEGG" id="bhy:BHWA1_01045"/>
<dbReference type="eggNOG" id="COG0059">
    <property type="taxonomic scope" value="Bacteria"/>
</dbReference>
<dbReference type="HOGENOM" id="CLU_033821_0_1_12"/>
<dbReference type="UniPathway" id="UPA00047">
    <property type="reaction ID" value="UER00056"/>
</dbReference>
<dbReference type="UniPathway" id="UPA00049">
    <property type="reaction ID" value="UER00060"/>
</dbReference>
<dbReference type="Proteomes" id="UP000001803">
    <property type="component" value="Chromosome"/>
</dbReference>
<dbReference type="GO" id="GO:0005829">
    <property type="term" value="C:cytosol"/>
    <property type="evidence" value="ECO:0007669"/>
    <property type="project" value="TreeGrafter"/>
</dbReference>
<dbReference type="GO" id="GO:0004455">
    <property type="term" value="F:ketol-acid reductoisomerase activity"/>
    <property type="evidence" value="ECO:0007669"/>
    <property type="project" value="UniProtKB-UniRule"/>
</dbReference>
<dbReference type="GO" id="GO:0000287">
    <property type="term" value="F:magnesium ion binding"/>
    <property type="evidence" value="ECO:0007669"/>
    <property type="project" value="UniProtKB-UniRule"/>
</dbReference>
<dbReference type="GO" id="GO:0050661">
    <property type="term" value="F:NADP binding"/>
    <property type="evidence" value="ECO:0007669"/>
    <property type="project" value="InterPro"/>
</dbReference>
<dbReference type="GO" id="GO:0009097">
    <property type="term" value="P:isoleucine biosynthetic process"/>
    <property type="evidence" value="ECO:0007669"/>
    <property type="project" value="UniProtKB-UniRule"/>
</dbReference>
<dbReference type="GO" id="GO:0009099">
    <property type="term" value="P:L-valine biosynthetic process"/>
    <property type="evidence" value="ECO:0007669"/>
    <property type="project" value="UniProtKB-UniRule"/>
</dbReference>
<dbReference type="FunFam" id="3.40.50.720:FF:000023">
    <property type="entry name" value="Ketol-acid reductoisomerase (NADP(+))"/>
    <property type="match status" value="1"/>
</dbReference>
<dbReference type="Gene3D" id="6.10.240.10">
    <property type="match status" value="1"/>
</dbReference>
<dbReference type="Gene3D" id="3.40.50.720">
    <property type="entry name" value="NAD(P)-binding Rossmann-like Domain"/>
    <property type="match status" value="1"/>
</dbReference>
<dbReference type="HAMAP" id="MF_00435">
    <property type="entry name" value="IlvC"/>
    <property type="match status" value="1"/>
</dbReference>
<dbReference type="InterPro" id="IPR008927">
    <property type="entry name" value="6-PGluconate_DH-like_C_sf"/>
</dbReference>
<dbReference type="InterPro" id="IPR013023">
    <property type="entry name" value="KARI"/>
</dbReference>
<dbReference type="InterPro" id="IPR000506">
    <property type="entry name" value="KARI_C"/>
</dbReference>
<dbReference type="InterPro" id="IPR013116">
    <property type="entry name" value="KARI_N"/>
</dbReference>
<dbReference type="InterPro" id="IPR014359">
    <property type="entry name" value="KARI_prok"/>
</dbReference>
<dbReference type="InterPro" id="IPR036291">
    <property type="entry name" value="NAD(P)-bd_dom_sf"/>
</dbReference>
<dbReference type="NCBIfam" id="TIGR00465">
    <property type="entry name" value="ilvC"/>
    <property type="match status" value="1"/>
</dbReference>
<dbReference type="NCBIfam" id="NF004017">
    <property type="entry name" value="PRK05479.1"/>
    <property type="match status" value="1"/>
</dbReference>
<dbReference type="NCBIfam" id="NF009940">
    <property type="entry name" value="PRK13403.1"/>
    <property type="match status" value="1"/>
</dbReference>
<dbReference type="PANTHER" id="PTHR21371">
    <property type="entry name" value="KETOL-ACID REDUCTOISOMERASE, MITOCHONDRIAL"/>
    <property type="match status" value="1"/>
</dbReference>
<dbReference type="PANTHER" id="PTHR21371:SF1">
    <property type="entry name" value="KETOL-ACID REDUCTOISOMERASE, MITOCHONDRIAL"/>
    <property type="match status" value="1"/>
</dbReference>
<dbReference type="Pfam" id="PF01450">
    <property type="entry name" value="KARI_C"/>
    <property type="match status" value="1"/>
</dbReference>
<dbReference type="Pfam" id="PF07991">
    <property type="entry name" value="KARI_N"/>
    <property type="match status" value="1"/>
</dbReference>
<dbReference type="PIRSF" id="PIRSF000116">
    <property type="entry name" value="IlvC_gammaproteo"/>
    <property type="match status" value="1"/>
</dbReference>
<dbReference type="SUPFAM" id="SSF48179">
    <property type="entry name" value="6-phosphogluconate dehydrogenase C-terminal domain-like"/>
    <property type="match status" value="1"/>
</dbReference>
<dbReference type="SUPFAM" id="SSF51735">
    <property type="entry name" value="NAD(P)-binding Rossmann-fold domains"/>
    <property type="match status" value="1"/>
</dbReference>
<dbReference type="PROSITE" id="PS51851">
    <property type="entry name" value="KARI_C"/>
    <property type="match status" value="1"/>
</dbReference>
<dbReference type="PROSITE" id="PS51850">
    <property type="entry name" value="KARI_N"/>
    <property type="match status" value="1"/>
</dbReference>
<sequence length="331" mass="36790">MIKKYYDADCNLGLLDGKTIAIMGYGSQGHAHAQNLKDSGMNVIVGLRKDSANCKKAEEAGFKVMEVEEAAKLADIVMMLVPDEVSADIYNTQVAPHMKEGNVLMYAHGFNIHFQFVVPAKNIDVIMVAPKGPGHTVRSQYLEGRGVPSLIAVYQDFSGRAKDYALAYASGIGAGRAGILETTFREETETDLFGEQAVLCGGVTELMKAGFDTLVEAGYEPEMAYFECIHEMKLIVDLIYSGGFAMMRYSISNTAEYGDYRTGRRMITEETRKEMKKVLREIQDGTFASEFIQEFSAGRKAKFNATKKLESEHKLEKVGAELRKMMSWIKK</sequence>
<feature type="chain" id="PRO_1000190913" description="Ketol-acid reductoisomerase (NADP(+))">
    <location>
        <begin position="1"/>
        <end position="331"/>
    </location>
</feature>
<feature type="domain" description="KARI N-terminal Rossmann" evidence="2">
    <location>
        <begin position="2"/>
        <end position="182"/>
    </location>
</feature>
<feature type="domain" description="KARI C-terminal knotted" evidence="3">
    <location>
        <begin position="183"/>
        <end position="329"/>
    </location>
</feature>
<feature type="active site" evidence="1">
    <location>
        <position position="108"/>
    </location>
</feature>
<feature type="binding site" evidence="1">
    <location>
        <begin position="25"/>
        <end position="28"/>
    </location>
    <ligand>
        <name>NADP(+)</name>
        <dbReference type="ChEBI" id="CHEBI:58349"/>
    </ligand>
</feature>
<feature type="binding site" evidence="1">
    <location>
        <position position="48"/>
    </location>
    <ligand>
        <name>NADP(+)</name>
        <dbReference type="ChEBI" id="CHEBI:58349"/>
    </ligand>
</feature>
<feature type="binding site" evidence="1">
    <location>
        <position position="51"/>
    </location>
    <ligand>
        <name>NADP(+)</name>
        <dbReference type="ChEBI" id="CHEBI:58349"/>
    </ligand>
</feature>
<feature type="binding site" evidence="1">
    <location>
        <position position="134"/>
    </location>
    <ligand>
        <name>NADP(+)</name>
        <dbReference type="ChEBI" id="CHEBI:58349"/>
    </ligand>
</feature>
<feature type="binding site" evidence="1">
    <location>
        <position position="191"/>
    </location>
    <ligand>
        <name>Mg(2+)</name>
        <dbReference type="ChEBI" id="CHEBI:18420"/>
        <label>1</label>
    </ligand>
</feature>
<feature type="binding site" evidence="1">
    <location>
        <position position="191"/>
    </location>
    <ligand>
        <name>Mg(2+)</name>
        <dbReference type="ChEBI" id="CHEBI:18420"/>
        <label>2</label>
    </ligand>
</feature>
<feature type="binding site" evidence="1">
    <location>
        <position position="195"/>
    </location>
    <ligand>
        <name>Mg(2+)</name>
        <dbReference type="ChEBI" id="CHEBI:18420"/>
        <label>1</label>
    </ligand>
</feature>
<feature type="binding site" evidence="1">
    <location>
        <position position="227"/>
    </location>
    <ligand>
        <name>Mg(2+)</name>
        <dbReference type="ChEBI" id="CHEBI:18420"/>
        <label>2</label>
    </ligand>
</feature>
<feature type="binding site" evidence="1">
    <location>
        <position position="231"/>
    </location>
    <ligand>
        <name>Mg(2+)</name>
        <dbReference type="ChEBI" id="CHEBI:18420"/>
        <label>2</label>
    </ligand>
</feature>
<feature type="binding site" evidence="1">
    <location>
        <position position="252"/>
    </location>
    <ligand>
        <name>substrate</name>
    </ligand>
</feature>
<protein>
    <recommendedName>
        <fullName evidence="1">Ketol-acid reductoisomerase (NADP(+))</fullName>
        <shortName evidence="1">KARI</shortName>
        <ecNumber evidence="1">1.1.1.86</ecNumber>
    </recommendedName>
    <alternativeName>
        <fullName evidence="1">Acetohydroxy-acid isomeroreductase</fullName>
        <shortName evidence="1">AHIR</shortName>
    </alternativeName>
    <alternativeName>
        <fullName evidence="1">Alpha-keto-beta-hydroxylacyl reductoisomerase</fullName>
    </alternativeName>
    <alternativeName>
        <fullName evidence="1">Ketol-acid reductoisomerase type 1</fullName>
    </alternativeName>
    <alternativeName>
        <fullName evidence="1">Ketol-acid reductoisomerase type I</fullName>
    </alternativeName>
</protein>
<keyword id="KW-0028">Amino-acid biosynthesis</keyword>
<keyword id="KW-0100">Branched-chain amino acid biosynthesis</keyword>
<keyword id="KW-0460">Magnesium</keyword>
<keyword id="KW-0479">Metal-binding</keyword>
<keyword id="KW-0521">NADP</keyword>
<keyword id="KW-0560">Oxidoreductase</keyword>
<organism>
    <name type="scientific">Brachyspira hyodysenteriae (strain ATCC 49526 / WA1)</name>
    <dbReference type="NCBI Taxonomy" id="565034"/>
    <lineage>
        <taxon>Bacteria</taxon>
        <taxon>Pseudomonadati</taxon>
        <taxon>Spirochaetota</taxon>
        <taxon>Spirochaetia</taxon>
        <taxon>Brachyspirales</taxon>
        <taxon>Brachyspiraceae</taxon>
        <taxon>Brachyspira</taxon>
    </lineage>
</organism>
<proteinExistence type="inferred from homology"/>
<name>ILVC_BRAHW</name>
<comment type="function">
    <text evidence="1">Involved in the biosynthesis of branched-chain amino acids (BCAA). Catalyzes an alkyl-migration followed by a ketol-acid reduction of (S)-2-acetolactate (S2AL) to yield (R)-2,3-dihydroxy-isovalerate. In the isomerase reaction, S2AL is rearranged via a Mg-dependent methyl migration to produce 3-hydroxy-3-methyl-2-ketobutyrate (HMKB). In the reductase reaction, this 2-ketoacid undergoes a metal-dependent reduction by NADPH to yield (R)-2,3-dihydroxy-isovalerate.</text>
</comment>
<comment type="catalytic activity">
    <reaction evidence="1">
        <text>(2R)-2,3-dihydroxy-3-methylbutanoate + NADP(+) = (2S)-2-acetolactate + NADPH + H(+)</text>
        <dbReference type="Rhea" id="RHEA:22068"/>
        <dbReference type="ChEBI" id="CHEBI:15378"/>
        <dbReference type="ChEBI" id="CHEBI:49072"/>
        <dbReference type="ChEBI" id="CHEBI:57783"/>
        <dbReference type="ChEBI" id="CHEBI:58349"/>
        <dbReference type="ChEBI" id="CHEBI:58476"/>
        <dbReference type="EC" id="1.1.1.86"/>
    </reaction>
</comment>
<comment type="catalytic activity">
    <reaction evidence="1">
        <text>(2R,3R)-2,3-dihydroxy-3-methylpentanoate + NADP(+) = (S)-2-ethyl-2-hydroxy-3-oxobutanoate + NADPH + H(+)</text>
        <dbReference type="Rhea" id="RHEA:13493"/>
        <dbReference type="ChEBI" id="CHEBI:15378"/>
        <dbReference type="ChEBI" id="CHEBI:49256"/>
        <dbReference type="ChEBI" id="CHEBI:49258"/>
        <dbReference type="ChEBI" id="CHEBI:57783"/>
        <dbReference type="ChEBI" id="CHEBI:58349"/>
        <dbReference type="EC" id="1.1.1.86"/>
    </reaction>
</comment>
<comment type="cofactor">
    <cofactor evidence="1">
        <name>Mg(2+)</name>
        <dbReference type="ChEBI" id="CHEBI:18420"/>
    </cofactor>
    <text evidence="1">Binds 2 magnesium ions per subunit.</text>
</comment>
<comment type="pathway">
    <text evidence="1">Amino-acid biosynthesis; L-isoleucine biosynthesis; L-isoleucine from 2-oxobutanoate: step 2/4.</text>
</comment>
<comment type="pathway">
    <text evidence="1">Amino-acid biosynthesis; L-valine biosynthesis; L-valine from pyruvate: step 2/4.</text>
</comment>
<comment type="similarity">
    <text evidence="1">Belongs to the ketol-acid reductoisomerase family.</text>
</comment>
<gene>
    <name evidence="1" type="primary">ilvC</name>
    <name type="ordered locus">BHWA1_01045</name>
</gene>
<evidence type="ECO:0000255" key="1">
    <source>
        <dbReference type="HAMAP-Rule" id="MF_00435"/>
    </source>
</evidence>
<evidence type="ECO:0000255" key="2">
    <source>
        <dbReference type="PROSITE-ProRule" id="PRU01197"/>
    </source>
</evidence>
<evidence type="ECO:0000255" key="3">
    <source>
        <dbReference type="PROSITE-ProRule" id="PRU01198"/>
    </source>
</evidence>